<organism>
    <name type="scientific">Methanococcoides burtonii (strain DSM 6242 / NBRC 107633 / OCM 468 / ACE-M)</name>
    <dbReference type="NCBI Taxonomy" id="259564"/>
    <lineage>
        <taxon>Archaea</taxon>
        <taxon>Methanobacteriati</taxon>
        <taxon>Methanobacteriota</taxon>
        <taxon>Stenosarchaea group</taxon>
        <taxon>Methanomicrobia</taxon>
        <taxon>Methanosarcinales</taxon>
        <taxon>Methanosarcinaceae</taxon>
        <taxon>Methanococcoides</taxon>
    </lineage>
</organism>
<comment type="function">
    <text evidence="1">Catalyzes the attachment of alanine to tRNA(Ala) in a two-step reaction: alanine is first activated by ATP to form Ala-AMP and then transferred to the acceptor end of tRNA(Ala). Also edits incorrectly charged Ser-tRNA(Ala) and Gly-tRNA(Ala) via its editing domain.</text>
</comment>
<comment type="catalytic activity">
    <reaction evidence="1">
        <text>tRNA(Ala) + L-alanine + ATP = L-alanyl-tRNA(Ala) + AMP + diphosphate</text>
        <dbReference type="Rhea" id="RHEA:12540"/>
        <dbReference type="Rhea" id="RHEA-COMP:9657"/>
        <dbReference type="Rhea" id="RHEA-COMP:9923"/>
        <dbReference type="ChEBI" id="CHEBI:30616"/>
        <dbReference type="ChEBI" id="CHEBI:33019"/>
        <dbReference type="ChEBI" id="CHEBI:57972"/>
        <dbReference type="ChEBI" id="CHEBI:78442"/>
        <dbReference type="ChEBI" id="CHEBI:78497"/>
        <dbReference type="ChEBI" id="CHEBI:456215"/>
        <dbReference type="EC" id="6.1.1.7"/>
    </reaction>
</comment>
<comment type="cofactor">
    <cofactor evidence="1">
        <name>Zn(2+)</name>
        <dbReference type="ChEBI" id="CHEBI:29105"/>
    </cofactor>
    <text evidence="1">Binds 1 zinc ion per subunit.</text>
</comment>
<comment type="subcellular location">
    <subcellularLocation>
        <location evidence="1">Cytoplasm</location>
    </subcellularLocation>
</comment>
<comment type="domain">
    <text evidence="1">Consists of three domains; the N-terminal catalytic domain, the editing domain and the C-terminal C-Ala domain. The editing domain removes incorrectly charged amino acids, while the C-Ala domain, along with tRNA(Ala), serves as a bridge to cooperatively bring together the editing and aminoacylation centers thus stimulating deacylation of misacylated tRNAs.</text>
</comment>
<comment type="similarity">
    <text evidence="1">Belongs to the class-II aminoacyl-tRNA synthetase family.</text>
</comment>
<name>SYA_METBU</name>
<feature type="chain" id="PRO_0000347885" description="Alanine--tRNA ligase">
    <location>
        <begin position="1"/>
        <end position="923"/>
    </location>
</feature>
<feature type="region of interest" description="Disordered" evidence="2">
    <location>
        <begin position="886"/>
        <end position="909"/>
    </location>
</feature>
<feature type="compositionally biased region" description="Gly residues" evidence="2">
    <location>
        <begin position="886"/>
        <end position="903"/>
    </location>
</feature>
<feature type="binding site" evidence="1">
    <location>
        <position position="611"/>
    </location>
    <ligand>
        <name>Zn(2+)</name>
        <dbReference type="ChEBI" id="CHEBI:29105"/>
    </ligand>
</feature>
<feature type="binding site" evidence="1">
    <location>
        <position position="615"/>
    </location>
    <ligand>
        <name>Zn(2+)</name>
        <dbReference type="ChEBI" id="CHEBI:29105"/>
    </ligand>
</feature>
<feature type="binding site" evidence="1">
    <location>
        <position position="714"/>
    </location>
    <ligand>
        <name>Zn(2+)</name>
        <dbReference type="ChEBI" id="CHEBI:29105"/>
    </ligand>
</feature>
<feature type="binding site" evidence="1">
    <location>
        <position position="718"/>
    </location>
    <ligand>
        <name>Zn(2+)</name>
        <dbReference type="ChEBI" id="CHEBI:29105"/>
    </ligand>
</feature>
<gene>
    <name evidence="1" type="primary">alaS</name>
    <name type="ordered locus">Mbur_2186</name>
</gene>
<reference key="1">
    <citation type="journal article" date="2009" name="ISME J.">
        <title>The genome sequence of the psychrophilic archaeon, Methanococcoides burtonii: the role of genome evolution in cold adaptation.</title>
        <authorList>
            <person name="Allen M.A."/>
            <person name="Lauro F.M."/>
            <person name="Williams T.J."/>
            <person name="Burg D."/>
            <person name="Siddiqui K.S."/>
            <person name="De Francisci D."/>
            <person name="Chong K.W."/>
            <person name="Pilak O."/>
            <person name="Chew H.H."/>
            <person name="De Maere M.Z."/>
            <person name="Ting L."/>
            <person name="Katrib M."/>
            <person name="Ng C."/>
            <person name="Sowers K.R."/>
            <person name="Galperin M.Y."/>
            <person name="Anderson I.J."/>
            <person name="Ivanova N."/>
            <person name="Dalin E."/>
            <person name="Martinez M."/>
            <person name="Lapidus A."/>
            <person name="Hauser L."/>
            <person name="Land M."/>
            <person name="Thomas T."/>
            <person name="Cavicchioli R."/>
        </authorList>
    </citation>
    <scope>NUCLEOTIDE SEQUENCE [LARGE SCALE GENOMIC DNA]</scope>
    <source>
        <strain>DSM 6242 / NBRC 107633 / OCM 468 / ACE-M</strain>
    </source>
</reference>
<sequence length="923" mass="103461">MLEDEYQIDFFSDNGFVRKQCPTCGNFFWTRDIERSTCGDAPCDPYSFIGNPVFKKELELPDMREFYLNFFEEQGHTRIERYPVIARWRDDIYLTIASIADFQPFVTSGQVPPPANPLTISQPCIRLSDLDAVGKSGRHLTTFEMMAHHAFNTKNEEIYWKEHTLELCDGLLNSLGADPMAVTYKEEPWAGGGNAGACVEVLIGGLEVATLVFMNLKKDKNGDIDIKGDMYSKMENYIVDTGYGLERLVWASKGSPTIYDAIFPSIVNELMGLAGIEHELENNEYSHILSQNARLAGLMDISEKANLLELRKQVAASIGITADKLSSIMEPVENVYAIADHTRCLTFMIGDGIIPSNVKAGYLARLVIRRTLRMMKDLGIMIPISEIIQMHINNLPEYPEFQKRFDVIKDILEHEERKFAETLERGRRMMEKSARHYKESGEKMPLETIIDMYDSHGIPPEISKAVASDVGVEVDLPDNFYSLVADKHSQSEEKEEKVVPFADKIARLPKTKRLFYDEPNRMDFDAVVLEVFDNHIVLDNTLMYPEGGGQPADHGTLTVEDVVLKVVDTQMYDGVVVHTINEIEDELHIRKGDMVVGRVNEKRRMAHARHHTATHIINDAAREVLGSHIWQTGAQKFADRARLDISHYKRITQEEANQIEIIANHTVMKNKRIISDWMDRTEAEQKYGFRLYQGGVPPGKMIRVLQVGNDIEACAGTHCTNTGLVGPIKILKTERIQDGVERLEYAAGEAAIIAMQDIETLVRDSSETLRVSAEQLPSTIERFFDEWKELKKENNKLKEELAHSRVSQLVNDAEDVNGIRIITKAIPHADSEELTKTAGELTQESNVVAILISEMDGVKIVATAGDDAVKRGVNVGAIVKEMSTMVGGGGGGRPNMARGGGTDPSGMDNALSRSVELLKEQLN</sequence>
<protein>
    <recommendedName>
        <fullName evidence="1">Alanine--tRNA ligase</fullName>
        <ecNumber evidence="1">6.1.1.7</ecNumber>
    </recommendedName>
    <alternativeName>
        <fullName evidence="1">Alanyl-tRNA synthetase</fullName>
        <shortName evidence="1">AlaRS</shortName>
    </alternativeName>
</protein>
<keyword id="KW-0030">Aminoacyl-tRNA synthetase</keyword>
<keyword id="KW-0067">ATP-binding</keyword>
<keyword id="KW-0963">Cytoplasm</keyword>
<keyword id="KW-0436">Ligase</keyword>
<keyword id="KW-0479">Metal-binding</keyword>
<keyword id="KW-0547">Nucleotide-binding</keyword>
<keyword id="KW-0648">Protein biosynthesis</keyword>
<keyword id="KW-0694">RNA-binding</keyword>
<keyword id="KW-0820">tRNA-binding</keyword>
<keyword id="KW-0862">Zinc</keyword>
<proteinExistence type="inferred from homology"/>
<accession>Q12U25</accession>
<evidence type="ECO:0000255" key="1">
    <source>
        <dbReference type="HAMAP-Rule" id="MF_00036"/>
    </source>
</evidence>
<evidence type="ECO:0000256" key="2">
    <source>
        <dbReference type="SAM" id="MobiDB-lite"/>
    </source>
</evidence>
<dbReference type="EC" id="6.1.1.7" evidence="1"/>
<dbReference type="EMBL" id="CP000300">
    <property type="protein sequence ID" value="ABE53051.1"/>
    <property type="molecule type" value="Genomic_DNA"/>
</dbReference>
<dbReference type="RefSeq" id="WP_011500187.1">
    <property type="nucleotide sequence ID" value="NC_007955.1"/>
</dbReference>
<dbReference type="SMR" id="Q12U25"/>
<dbReference type="STRING" id="259564.Mbur_2186"/>
<dbReference type="GeneID" id="3997042"/>
<dbReference type="KEGG" id="mbu:Mbur_2186"/>
<dbReference type="HOGENOM" id="CLU_004485_4_0_2"/>
<dbReference type="OrthoDB" id="7506at2157"/>
<dbReference type="Proteomes" id="UP000001979">
    <property type="component" value="Chromosome"/>
</dbReference>
<dbReference type="GO" id="GO:0005737">
    <property type="term" value="C:cytoplasm"/>
    <property type="evidence" value="ECO:0007669"/>
    <property type="project" value="UniProtKB-SubCell"/>
</dbReference>
<dbReference type="GO" id="GO:0004813">
    <property type="term" value="F:alanine-tRNA ligase activity"/>
    <property type="evidence" value="ECO:0007669"/>
    <property type="project" value="UniProtKB-UniRule"/>
</dbReference>
<dbReference type="GO" id="GO:0002161">
    <property type="term" value="F:aminoacyl-tRNA deacylase activity"/>
    <property type="evidence" value="ECO:0007669"/>
    <property type="project" value="UniProtKB-ARBA"/>
</dbReference>
<dbReference type="GO" id="GO:0005524">
    <property type="term" value="F:ATP binding"/>
    <property type="evidence" value="ECO:0007669"/>
    <property type="project" value="UniProtKB-UniRule"/>
</dbReference>
<dbReference type="GO" id="GO:0000049">
    <property type="term" value="F:tRNA binding"/>
    <property type="evidence" value="ECO:0007669"/>
    <property type="project" value="UniProtKB-KW"/>
</dbReference>
<dbReference type="GO" id="GO:0008270">
    <property type="term" value="F:zinc ion binding"/>
    <property type="evidence" value="ECO:0007669"/>
    <property type="project" value="UniProtKB-UniRule"/>
</dbReference>
<dbReference type="GO" id="GO:0006419">
    <property type="term" value="P:alanyl-tRNA aminoacylation"/>
    <property type="evidence" value="ECO:0007669"/>
    <property type="project" value="UniProtKB-UniRule"/>
</dbReference>
<dbReference type="CDD" id="cd00673">
    <property type="entry name" value="AlaRS_core"/>
    <property type="match status" value="1"/>
</dbReference>
<dbReference type="FunFam" id="3.10.310.40:FF:000001">
    <property type="entry name" value="Alanine--tRNA ligase"/>
    <property type="match status" value="1"/>
</dbReference>
<dbReference type="FunFam" id="3.30.54.20:FF:000005">
    <property type="entry name" value="Alanine--tRNA ligase"/>
    <property type="match status" value="1"/>
</dbReference>
<dbReference type="FunFam" id="3.30.930.10:FF:000056">
    <property type="entry name" value="Alanine--tRNA ligase"/>
    <property type="match status" value="1"/>
</dbReference>
<dbReference type="FunFam" id="3.30.980.10:FF:000004">
    <property type="entry name" value="Alanine--tRNA ligase, cytoplasmic"/>
    <property type="match status" value="1"/>
</dbReference>
<dbReference type="Gene3D" id="2.40.30.130">
    <property type="match status" value="1"/>
</dbReference>
<dbReference type="Gene3D" id="3.10.310.40">
    <property type="match status" value="1"/>
</dbReference>
<dbReference type="Gene3D" id="3.30.54.20">
    <property type="match status" value="1"/>
</dbReference>
<dbReference type="Gene3D" id="6.10.250.550">
    <property type="match status" value="1"/>
</dbReference>
<dbReference type="Gene3D" id="3.30.930.10">
    <property type="entry name" value="Bira Bifunctional Protein, Domain 2"/>
    <property type="match status" value="1"/>
</dbReference>
<dbReference type="Gene3D" id="3.30.980.10">
    <property type="entry name" value="Threonyl-trna Synthetase, Chain A, domain 2"/>
    <property type="match status" value="1"/>
</dbReference>
<dbReference type="HAMAP" id="MF_00036_A">
    <property type="entry name" value="Ala_tRNA_synth_A"/>
    <property type="match status" value="1"/>
</dbReference>
<dbReference type="InterPro" id="IPR045864">
    <property type="entry name" value="aa-tRNA-synth_II/BPL/LPL"/>
</dbReference>
<dbReference type="InterPro" id="IPR002318">
    <property type="entry name" value="Ala-tRNA-lgiase_IIc"/>
</dbReference>
<dbReference type="InterPro" id="IPR018162">
    <property type="entry name" value="Ala-tRNA-ligase_IIc_anticod-bd"/>
</dbReference>
<dbReference type="InterPro" id="IPR018165">
    <property type="entry name" value="Ala-tRNA-synth_IIc_core"/>
</dbReference>
<dbReference type="InterPro" id="IPR018164">
    <property type="entry name" value="Ala-tRNA-synth_IIc_N"/>
</dbReference>
<dbReference type="InterPro" id="IPR022429">
    <property type="entry name" value="Ala-tRNA_lgiase_arc"/>
</dbReference>
<dbReference type="InterPro" id="IPR050058">
    <property type="entry name" value="Ala-tRNA_ligase"/>
</dbReference>
<dbReference type="InterPro" id="IPR003156">
    <property type="entry name" value="DHHA1_dom"/>
</dbReference>
<dbReference type="InterPro" id="IPR018163">
    <property type="entry name" value="Thr/Ala-tRNA-synth_IIc_edit"/>
</dbReference>
<dbReference type="InterPro" id="IPR009000">
    <property type="entry name" value="Transl_B-barrel_sf"/>
</dbReference>
<dbReference type="InterPro" id="IPR012947">
    <property type="entry name" value="tRNA_SAD"/>
</dbReference>
<dbReference type="NCBIfam" id="TIGR03683">
    <property type="entry name" value="A-tRNA_syn_arch"/>
    <property type="match status" value="1"/>
</dbReference>
<dbReference type="NCBIfam" id="TIGR00344">
    <property type="entry name" value="alaS"/>
    <property type="match status" value="1"/>
</dbReference>
<dbReference type="PANTHER" id="PTHR11777:SF9">
    <property type="entry name" value="ALANINE--TRNA LIGASE, CYTOPLASMIC"/>
    <property type="match status" value="1"/>
</dbReference>
<dbReference type="PANTHER" id="PTHR11777">
    <property type="entry name" value="ALANYL-TRNA SYNTHETASE"/>
    <property type="match status" value="1"/>
</dbReference>
<dbReference type="Pfam" id="PF02272">
    <property type="entry name" value="DHHA1"/>
    <property type="match status" value="1"/>
</dbReference>
<dbReference type="Pfam" id="PF01411">
    <property type="entry name" value="tRNA-synt_2c"/>
    <property type="match status" value="1"/>
</dbReference>
<dbReference type="Pfam" id="PF07973">
    <property type="entry name" value="tRNA_SAD"/>
    <property type="match status" value="1"/>
</dbReference>
<dbReference type="PRINTS" id="PR00980">
    <property type="entry name" value="TRNASYNTHALA"/>
</dbReference>
<dbReference type="SMART" id="SM00863">
    <property type="entry name" value="tRNA_SAD"/>
    <property type="match status" value="1"/>
</dbReference>
<dbReference type="SUPFAM" id="SSF55681">
    <property type="entry name" value="Class II aaRS and biotin synthetases"/>
    <property type="match status" value="1"/>
</dbReference>
<dbReference type="SUPFAM" id="SSF101353">
    <property type="entry name" value="Putative anticodon-binding domain of alanyl-tRNA synthetase (AlaRS)"/>
    <property type="match status" value="1"/>
</dbReference>
<dbReference type="SUPFAM" id="SSF55186">
    <property type="entry name" value="ThrRS/AlaRS common domain"/>
    <property type="match status" value="1"/>
</dbReference>
<dbReference type="SUPFAM" id="SSF50447">
    <property type="entry name" value="Translation proteins"/>
    <property type="match status" value="1"/>
</dbReference>
<dbReference type="PROSITE" id="PS50860">
    <property type="entry name" value="AA_TRNA_LIGASE_II_ALA"/>
    <property type="match status" value="1"/>
</dbReference>